<reference key="1">
    <citation type="journal article" date="2009" name="Acta Crystallogr. F">
        <title>Complete amino-acid sequence, crystallization and preliminary X-ray diffraction studies of leucurolysin-a, a nonhaemorrhagic metalloproteinase from Bothrops leucurus snake venom.</title>
        <authorList>
            <person name="Ferreira R.N."/>
            <person name="Rates B."/>
            <person name="Richardson M."/>
            <person name="Guimaraes B.G."/>
            <person name="Sanchez E.O."/>
            <person name="Pimenta A.M."/>
            <person name="Nagem R.A."/>
        </authorList>
    </citation>
    <scope>PROTEIN SEQUENCE</scope>
    <scope>IDENTIFICATION BY MASS SPECTROMETRY</scope>
    <scope>PYROGLUTAMATE FORMATION AT GLN-1</scope>
    <scope>CRYSTALLIZATION</scope>
    <source>
        <tissue>Venom</tissue>
    </source>
</reference>
<reference key="2">
    <citation type="journal article" date="2006" name="Biochimie">
        <title>Isolation and biochemical characterization of a fibrinolytic proteinase from Bothrops leucurus (white-tailed jararaca) snake venom.</title>
        <authorList>
            <person name="Bello C.A."/>
            <person name="Hermogenes A.L.N."/>
            <person name="Magalhaes A."/>
            <person name="Veiga S.S."/>
            <person name="Gremski L.H."/>
            <person name="Richardson M."/>
            <person name="Sanchez E.F."/>
        </authorList>
    </citation>
    <scope>PROTEIN SEQUENCE OF 4-202</scope>
    <scope>FUNCTION</scope>
    <scope>COFACTOR</scope>
    <scope>ACTIVITY REGULATION</scope>
    <scope>BIOPHYSICOCHEMICAL PROPERTIES</scope>
    <scope>SUBUNIT</scope>
    <scope>SUBCELLULAR LOCATION</scope>
    <source>
        <tissue>Venom</tissue>
    </source>
</reference>
<reference key="3">
    <citation type="journal article" date="2007" name="Toxicon">
        <title>Cytotoxic, thrombolytic and edematogenic activities of leucurolysin-a, a metalloproteinase from Bothrops leucurus snake venom.</title>
        <authorList>
            <person name="Gremski L.H."/>
            <person name="Chaim O.M."/>
            <person name="Paludo K.S."/>
            <person name="Sade Y.B."/>
            <person name="Otuki M.F."/>
            <person name="Richardson M."/>
            <person name="Gremski W."/>
            <person name="Sanchez E.F."/>
            <person name="Veiga S.S."/>
        </authorList>
    </citation>
    <scope>FUNCTION</scope>
    <source>
        <tissue>Venom</tissue>
    </source>
</reference>
<accession>P84907</accession>
<sequence length="202" mass="23019">QQFSPRYIELVVVADHGMFKKYNSNLNTIRKWVHEMLNTVNGFFRSMNVDASLVNLEVWSKKDLIKVEKDSSKTLTSFGEWRERDLLPRISHDHAQLLTVIFLDEETIGIAYTAGMCDLSQSVAVVMDHSKKNLRVAVTMAHELGHNLGMRHDGNQCHCNAPSCIMADTLSKGLSFEFSDCSQNQYQTYLTKHNPQCILNKP</sequence>
<comment type="function">
    <text evidence="4 5">Non-hemorrhagic metalloproteinase that hydrolyzes the alpha chains of fibrinogen, as well as fibrin, fibronectin and casein. Beta and gamma chains are also hydrolyzed, but more slowly. Thrombolytic activity is also observed. Induces detachment of endothelial cells followed by death, and inhibits endothelial cell adhesion to fibronectin. Induces edema in mouse paw. Inhibits ADP-induced platelet aggregation on human platelet-rich plasma with an IC(50) of 2.8 uM.</text>
</comment>
<comment type="cofactor">
    <cofactor evidence="1">
        <name>Zn(2+)</name>
        <dbReference type="ChEBI" id="CHEBI:29105"/>
    </cofactor>
    <text evidence="1">Binds 1 zinc ion per subunit.</text>
</comment>
<comment type="activity regulation">
    <text evidence="4">Inhibited by EDTA and 2-mercaptoethanol. Inhibited by 1 mM zinc ion and to a lesser extent by 1 mM calcium ion.</text>
</comment>
<comment type="biophysicochemical properties">
    <phDependence>
        <text evidence="4">Optimum pH is 7.0 for dimethylcasein with a complete loss of activity above pH 11.0.</text>
    </phDependence>
    <temperatureDependence>
        <text evidence="4">Optimum temperature is 30-40 degrees Celsius with a complete loss of activity above 60 degrees Celsius.</text>
    </temperatureDependence>
</comment>
<comment type="subunit">
    <text evidence="4">Monomer.</text>
</comment>
<comment type="subcellular location">
    <subcellularLocation>
        <location evidence="4">Secreted</location>
    </subcellularLocation>
</comment>
<comment type="tissue specificity">
    <text evidence="8">Expressed by the venom gland.</text>
</comment>
<comment type="miscellaneous">
    <text evidence="8">Negative results: has no activity toward laminin (PubMed:16139412).</text>
</comment>
<comment type="similarity">
    <text evidence="7">Belongs to the venom metalloproteinase (M12B) family. P-I subfamily.</text>
</comment>
<protein>
    <recommendedName>
        <fullName>Snake venom metalloproteinase leucurolysin-A</fullName>
        <shortName>Leuc-A</shortName>
        <shortName>SVMP</shortName>
        <ecNumber>3.4.24.-</ecNumber>
    </recommendedName>
</protein>
<dbReference type="EC" id="3.4.24.-"/>
<dbReference type="PDB" id="4Q1L">
    <property type="method" value="X-ray"/>
    <property type="resolution" value="1.90 A"/>
    <property type="chains" value="A=1-202"/>
</dbReference>
<dbReference type="PDBsum" id="4Q1L"/>
<dbReference type="SMR" id="P84907"/>
<dbReference type="EvolutionaryTrace" id="P84907"/>
<dbReference type="GO" id="GO:0005576">
    <property type="term" value="C:extracellular region"/>
    <property type="evidence" value="ECO:0000314"/>
    <property type="project" value="UniProtKB"/>
</dbReference>
<dbReference type="GO" id="GO:0005886">
    <property type="term" value="C:plasma membrane"/>
    <property type="evidence" value="ECO:0007669"/>
    <property type="project" value="TreeGrafter"/>
</dbReference>
<dbReference type="GO" id="GO:0004222">
    <property type="term" value="F:metalloendopeptidase activity"/>
    <property type="evidence" value="ECO:0000314"/>
    <property type="project" value="UniProtKB"/>
</dbReference>
<dbReference type="GO" id="GO:0090729">
    <property type="term" value="F:toxin activity"/>
    <property type="evidence" value="ECO:0007669"/>
    <property type="project" value="UniProtKB-KW"/>
</dbReference>
<dbReference type="GO" id="GO:0008270">
    <property type="term" value="F:zinc ion binding"/>
    <property type="evidence" value="ECO:0000314"/>
    <property type="project" value="UniProtKB"/>
</dbReference>
<dbReference type="GO" id="GO:0042730">
    <property type="term" value="P:fibrinolysis"/>
    <property type="evidence" value="ECO:0000314"/>
    <property type="project" value="UniProtKB"/>
</dbReference>
<dbReference type="GO" id="GO:0006508">
    <property type="term" value="P:proteolysis"/>
    <property type="evidence" value="ECO:0007669"/>
    <property type="project" value="UniProtKB-KW"/>
</dbReference>
<dbReference type="CDD" id="cd04269">
    <property type="entry name" value="ZnMc_adamalysin_II_like"/>
    <property type="match status" value="1"/>
</dbReference>
<dbReference type="FunFam" id="3.40.390.10:FF:000002">
    <property type="entry name" value="Disintegrin and metalloproteinase domain-containing protein 22"/>
    <property type="match status" value="1"/>
</dbReference>
<dbReference type="Gene3D" id="3.40.390.10">
    <property type="entry name" value="Collagenase (Catalytic Domain)"/>
    <property type="match status" value="1"/>
</dbReference>
<dbReference type="InterPro" id="IPR024079">
    <property type="entry name" value="MetalloPept_cat_dom_sf"/>
</dbReference>
<dbReference type="InterPro" id="IPR001590">
    <property type="entry name" value="Peptidase_M12B"/>
</dbReference>
<dbReference type="InterPro" id="IPR034027">
    <property type="entry name" value="Reprolysin_adamalysin"/>
</dbReference>
<dbReference type="PANTHER" id="PTHR11905">
    <property type="entry name" value="ADAM A DISINTEGRIN AND METALLOPROTEASE DOMAIN"/>
    <property type="match status" value="1"/>
</dbReference>
<dbReference type="PANTHER" id="PTHR11905:SF32">
    <property type="entry name" value="DISINTEGRIN AND METALLOPROTEINASE DOMAIN-CONTAINING PROTEIN 28"/>
    <property type="match status" value="1"/>
</dbReference>
<dbReference type="Pfam" id="PF01421">
    <property type="entry name" value="Reprolysin"/>
    <property type="match status" value="1"/>
</dbReference>
<dbReference type="SUPFAM" id="SSF55486">
    <property type="entry name" value="Metalloproteases ('zincins'), catalytic domain"/>
    <property type="match status" value="1"/>
</dbReference>
<dbReference type="PROSITE" id="PS50215">
    <property type="entry name" value="ADAM_MEPRO"/>
    <property type="match status" value="1"/>
</dbReference>
<dbReference type="PROSITE" id="PS00142">
    <property type="entry name" value="ZINC_PROTEASE"/>
    <property type="match status" value="1"/>
</dbReference>
<feature type="chain" id="PRO_0000249183" description="Snake venom metalloproteinase leucurolysin-A">
    <location>
        <begin position="1"/>
        <end position="202"/>
    </location>
</feature>
<feature type="domain" description="Peptidase M12B" evidence="2">
    <location>
        <begin position="6"/>
        <end position="202"/>
    </location>
</feature>
<feature type="active site" evidence="2 3">
    <location>
        <position position="143"/>
    </location>
</feature>
<feature type="binding site" evidence="9">
    <location>
        <position position="9"/>
    </location>
    <ligand>
        <name>Ca(2+)</name>
        <dbReference type="ChEBI" id="CHEBI:29108"/>
        <label>1</label>
    </ligand>
</feature>
<feature type="binding site" evidence="9">
    <location>
        <position position="93"/>
    </location>
    <ligand>
        <name>Ca(2+)</name>
        <dbReference type="ChEBI" id="CHEBI:29108"/>
        <label>1</label>
    </ligand>
</feature>
<feature type="binding site" evidence="9">
    <location>
        <position position="142"/>
    </location>
    <ligand>
        <name>Zn(2+)</name>
        <dbReference type="ChEBI" id="CHEBI:29105"/>
        <note>catalytic</note>
    </ligand>
</feature>
<feature type="binding site" evidence="9">
    <location>
        <position position="146"/>
    </location>
    <ligand>
        <name>Zn(2+)</name>
        <dbReference type="ChEBI" id="CHEBI:29105"/>
        <note>catalytic</note>
    </ligand>
</feature>
<feature type="binding site" evidence="9">
    <location>
        <position position="152"/>
    </location>
    <ligand>
        <name>Zn(2+)</name>
        <dbReference type="ChEBI" id="CHEBI:29105"/>
        <note>catalytic</note>
    </ligand>
</feature>
<feature type="binding site" evidence="9">
    <location>
        <position position="197"/>
    </location>
    <ligand>
        <name>Ca(2+)</name>
        <dbReference type="ChEBI" id="CHEBI:29108"/>
        <label>1</label>
    </ligand>
</feature>
<feature type="binding site" evidence="9">
    <location>
        <position position="200"/>
    </location>
    <ligand>
        <name>Ca(2+)</name>
        <dbReference type="ChEBI" id="CHEBI:29108"/>
        <label>1</label>
    </ligand>
</feature>
<feature type="modified residue" description="Pyrrolidone carboxylic acid" evidence="6">
    <location>
        <position position="1"/>
    </location>
</feature>
<feature type="disulfide bond" evidence="9">
    <location>
        <begin position="117"/>
        <end position="197"/>
    </location>
</feature>
<feature type="disulfide bond" evidence="9">
    <location>
        <begin position="157"/>
        <end position="181"/>
    </location>
</feature>
<feature type="disulfide bond" evidence="9">
    <location>
        <begin position="159"/>
        <end position="164"/>
    </location>
</feature>
<feature type="sequence conflict" description="In Ref. 2; AA sequence." evidence="7" ref="2">
    <original>F</original>
    <variation>Y</variation>
    <location>
        <position position="44"/>
    </location>
</feature>
<feature type="sequence conflict" description="In Ref. 2; AA sequence." evidence="7" ref="2">
    <original>SVAVVMDHSKKNLR</original>
    <variation>MVAWGQDY</variation>
    <location>
        <begin position="122"/>
        <end position="135"/>
    </location>
</feature>
<feature type="sequence conflict" description="In Ref. 2; AA sequence." evidence="7" ref="2">
    <original>T</original>
    <variation>S</variation>
    <location>
        <position position="139"/>
    </location>
</feature>
<feature type="strand" evidence="10">
    <location>
        <begin position="6"/>
        <end position="14"/>
    </location>
</feature>
<feature type="helix" evidence="10">
    <location>
        <begin position="16"/>
        <end position="21"/>
    </location>
</feature>
<feature type="turn" evidence="10">
    <location>
        <begin position="22"/>
        <end position="24"/>
    </location>
</feature>
<feature type="helix" evidence="10">
    <location>
        <begin position="26"/>
        <end position="44"/>
    </location>
</feature>
<feature type="helix" evidence="10">
    <location>
        <begin position="45"/>
        <end position="47"/>
    </location>
</feature>
<feature type="strand" evidence="10">
    <location>
        <begin position="49"/>
        <end position="58"/>
    </location>
</feature>
<feature type="strand" evidence="10">
    <location>
        <begin position="60"/>
        <end position="62"/>
    </location>
</feature>
<feature type="helix" evidence="10">
    <location>
        <begin position="71"/>
        <end position="84"/>
    </location>
</feature>
<feature type="helix" evidence="10">
    <location>
        <begin position="86"/>
        <end position="89"/>
    </location>
</feature>
<feature type="strand" evidence="10">
    <location>
        <begin position="93"/>
        <end position="99"/>
    </location>
</feature>
<feature type="helix" evidence="10">
    <location>
        <begin position="104"/>
        <end position="106"/>
    </location>
</feature>
<feature type="strand" evidence="10">
    <location>
        <begin position="109"/>
        <end position="111"/>
    </location>
</feature>
<feature type="turn" evidence="10">
    <location>
        <begin position="119"/>
        <end position="121"/>
    </location>
</feature>
<feature type="strand" evidence="10">
    <location>
        <begin position="122"/>
        <end position="127"/>
    </location>
</feature>
<feature type="helix" evidence="10">
    <location>
        <begin position="133"/>
        <end position="147"/>
    </location>
</feature>
<feature type="strand" evidence="10">
    <location>
        <begin position="160"/>
        <end position="164"/>
    </location>
</feature>
<feature type="strand" evidence="10">
    <location>
        <begin position="167"/>
        <end position="169"/>
    </location>
</feature>
<feature type="helix" evidence="10">
    <location>
        <begin position="180"/>
        <end position="193"/>
    </location>
</feature>
<feature type="helix" evidence="10">
    <location>
        <begin position="196"/>
        <end position="198"/>
    </location>
</feature>
<keyword id="KW-0002">3D-structure</keyword>
<keyword id="KW-0903">Direct protein sequencing</keyword>
<keyword id="KW-1015">Disulfide bond</keyword>
<keyword id="KW-1199">Hemostasis impairing toxin</keyword>
<keyword id="KW-0378">Hydrolase</keyword>
<keyword id="KW-0479">Metal-binding</keyword>
<keyword id="KW-0482">Metalloprotease</keyword>
<keyword id="KW-1201">Platelet aggregation inhibiting toxin</keyword>
<keyword id="KW-0645">Protease</keyword>
<keyword id="KW-0873">Pyrrolidone carboxylic acid</keyword>
<keyword id="KW-0964">Secreted</keyword>
<keyword id="KW-0800">Toxin</keyword>
<keyword id="KW-0862">Zinc</keyword>
<proteinExistence type="evidence at protein level"/>
<organism>
    <name type="scientific">Bothrops leucurus</name>
    <name type="common">Whitetail lancehead</name>
    <dbReference type="NCBI Taxonomy" id="157295"/>
    <lineage>
        <taxon>Eukaryota</taxon>
        <taxon>Metazoa</taxon>
        <taxon>Chordata</taxon>
        <taxon>Craniata</taxon>
        <taxon>Vertebrata</taxon>
        <taxon>Euteleostomi</taxon>
        <taxon>Lepidosauria</taxon>
        <taxon>Squamata</taxon>
        <taxon>Bifurcata</taxon>
        <taxon>Unidentata</taxon>
        <taxon>Episquamata</taxon>
        <taxon>Toxicofera</taxon>
        <taxon>Serpentes</taxon>
        <taxon>Colubroidea</taxon>
        <taxon>Viperidae</taxon>
        <taxon>Crotalinae</taxon>
        <taxon>Bothrops</taxon>
    </lineage>
</organism>
<name>VM1LA_BOTLC</name>
<evidence type="ECO:0000250" key="1"/>
<evidence type="ECO:0000255" key="2">
    <source>
        <dbReference type="PROSITE-ProRule" id="PRU00276"/>
    </source>
</evidence>
<evidence type="ECO:0000255" key="3">
    <source>
        <dbReference type="PROSITE-ProRule" id="PRU10095"/>
    </source>
</evidence>
<evidence type="ECO:0000269" key="4">
    <source>
    </source>
</evidence>
<evidence type="ECO:0000269" key="5">
    <source>
    </source>
</evidence>
<evidence type="ECO:0000269" key="6">
    <source>
    </source>
</evidence>
<evidence type="ECO:0000305" key="7"/>
<evidence type="ECO:0000305" key="8">
    <source>
    </source>
</evidence>
<evidence type="ECO:0007744" key="9">
    <source>
        <dbReference type="PDB" id="4Q1L"/>
    </source>
</evidence>
<evidence type="ECO:0007829" key="10">
    <source>
        <dbReference type="PDB" id="4Q1L"/>
    </source>
</evidence>